<name>RESTB_XENLA</name>
<sequence length="529" mass="60019">MATQMVNQSTGNSLFCTSTYSNISLDNDMYGLHDLSKADMAAPRLIMLANVALTGELSSGCCDYTPEGERQMAELTTVNDNSFSDSEGDRLEDSPSMDIQSHNFIMEMEPAECSKEGTSENDGTLLSNTLEVEVQKDKRTPSPTDDKYKCVKSKPFRCKPCQYKAESEEEFVHHIKIHSAKIYVDNDSNKKAQGNEADSSISEESDVSKGPIQCDRCGYNTNRFDHYLAHLKHHNKAGENERVYKCTICTYTTVSEYHWKKHLRNHYPRILYTCSQCSYFSDRKNNYIQHIRTHTGERPYQCILCPYSSSQKTHLTRHMRTHSGEKPFKCEQCSYVASNQHEVTRHARQVHNGPKPLTCPHCDYKTADRSNFKKHVELHVNPRQFLCPVCDYAASKKCNLQYHIKSRHSGCTNITMDVSKVKLRTKKGDIGVADVDANKQTENGNIIDKSVEETVKAEKRESCGKAKKSIVNLVDGQVAKKRRLSSTQKKIKTSDARPEKILDKSRKSSCVKRKSDLLENSNDTQTSTV</sequence>
<gene>
    <name type="primary">rest-b</name>
    <name type="synonym">nrsf-b</name>
</gene>
<accession>Q9PVG3</accession>
<accession>Q9PVG2</accession>
<proteinExistence type="evidence at transcript level"/>
<keyword id="KW-0025">Alternative splicing</keyword>
<keyword id="KW-0963">Cytoplasm</keyword>
<keyword id="KW-0217">Developmental protein</keyword>
<keyword id="KW-0479">Metal-binding</keyword>
<keyword id="KW-0539">Nucleus</keyword>
<keyword id="KW-1185">Reference proteome</keyword>
<keyword id="KW-0677">Repeat</keyword>
<keyword id="KW-0678">Repressor</keyword>
<keyword id="KW-0804">Transcription</keyword>
<keyword id="KW-0805">Transcription regulation</keyword>
<keyword id="KW-0862">Zinc</keyword>
<keyword id="KW-0863">Zinc-finger</keyword>
<protein>
    <recommendedName>
        <fullName>RE1-silencing transcription factor B</fullName>
    </recommendedName>
    <alternativeName>
        <fullName>Neural-restrictive silencer factor B</fullName>
    </alternativeName>
</protein>
<comment type="function">
    <text evidence="1 2">Transcriptional repressor which binds neuron-restrictive silencer element (NRSE) and represses neuronal gene transcription in non-neuronal cells (By similarity). Plays a role in the early development of the nervous system and is required for proper patterning of the neuroectoderm during gastrulation. This involves the correct speciation of the neuroepithelial domain and adequate development of the non-neural ectoderm (By similarity).</text>
</comment>
<comment type="subcellular location">
    <subcellularLocation>
        <location evidence="1">Nucleus</location>
    </subcellularLocation>
    <subcellularLocation>
        <location evidence="1">Cytoplasm</location>
    </subcellularLocation>
</comment>
<comment type="alternative products">
    <event type="alternative splicing"/>
    <isoform>
        <id>Q9PVG3-1</id>
        <name>1</name>
        <sequence type="displayed"/>
    </isoform>
    <isoform>
        <id>Q9PVG3-2</id>
        <name>2</name>
        <name>rest-T4</name>
        <sequence type="described" ref="VSP_022084 VSP_022085"/>
    </isoform>
</comment>
<comment type="domain">
    <text evidence="1">The C2H2-type zinc finger 5 is required for nuclear localization.</text>
</comment>
<dbReference type="EMBL" id="AF096301">
    <property type="protein sequence ID" value="AAF06720.1"/>
    <property type="molecule type" value="mRNA"/>
</dbReference>
<dbReference type="EMBL" id="AF096302">
    <property type="protein sequence ID" value="AAF06721.1"/>
    <property type="molecule type" value="mRNA"/>
</dbReference>
<dbReference type="RefSeq" id="NP_001165645.1">
    <molecule id="Q9PVG3-2"/>
    <property type="nucleotide sequence ID" value="NM_001172174.1"/>
</dbReference>
<dbReference type="SMR" id="Q9PVG3"/>
<dbReference type="GeneID" id="373614"/>
<dbReference type="KEGG" id="xla:373614"/>
<dbReference type="AGR" id="Xenbase:XB-GENE-955471"/>
<dbReference type="CTD" id="373614"/>
<dbReference type="Xenbase" id="XB-GENE-955471">
    <property type="gene designation" value="rest.S"/>
</dbReference>
<dbReference type="OrthoDB" id="427030at2759"/>
<dbReference type="Proteomes" id="UP000186698">
    <property type="component" value="Chromosome 1S"/>
</dbReference>
<dbReference type="Bgee" id="373614">
    <property type="expression patterns" value="Expressed in egg cell and 15 other cell types or tissues"/>
</dbReference>
<dbReference type="GO" id="GO:0005737">
    <property type="term" value="C:cytoplasm"/>
    <property type="evidence" value="ECO:0000250"/>
    <property type="project" value="UniProtKB"/>
</dbReference>
<dbReference type="GO" id="GO:0005634">
    <property type="term" value="C:nucleus"/>
    <property type="evidence" value="ECO:0000250"/>
    <property type="project" value="UniProtKB"/>
</dbReference>
<dbReference type="GO" id="GO:0008270">
    <property type="term" value="F:zinc ion binding"/>
    <property type="evidence" value="ECO:0007669"/>
    <property type="project" value="UniProtKB-KW"/>
</dbReference>
<dbReference type="GO" id="GO:0045892">
    <property type="term" value="P:negative regulation of DNA-templated transcription"/>
    <property type="evidence" value="ECO:0000250"/>
    <property type="project" value="UniProtKB"/>
</dbReference>
<dbReference type="GO" id="GO:0045666">
    <property type="term" value="P:positive regulation of neuron differentiation"/>
    <property type="evidence" value="ECO:0000250"/>
    <property type="project" value="UniProtKB"/>
</dbReference>
<dbReference type="GO" id="GO:0045944">
    <property type="term" value="P:positive regulation of transcription by RNA polymerase II"/>
    <property type="evidence" value="ECO:0000318"/>
    <property type="project" value="GO_Central"/>
</dbReference>
<dbReference type="GO" id="GO:0000381">
    <property type="term" value="P:regulation of alternative mRNA splicing, via spliceosome"/>
    <property type="evidence" value="ECO:0000250"/>
    <property type="project" value="UniProtKB"/>
</dbReference>
<dbReference type="GO" id="GO:0045667">
    <property type="term" value="P:regulation of osteoblast differentiation"/>
    <property type="evidence" value="ECO:0000250"/>
    <property type="project" value="UniProtKB"/>
</dbReference>
<dbReference type="GO" id="GO:0001666">
    <property type="term" value="P:response to hypoxia"/>
    <property type="evidence" value="ECO:0000250"/>
    <property type="project" value="UniProtKB"/>
</dbReference>
<dbReference type="FunFam" id="3.30.160.60:FF:002187">
    <property type="entry name" value="RE1-silencing transcription factor"/>
    <property type="match status" value="1"/>
</dbReference>
<dbReference type="FunFam" id="3.30.160.60:FF:000662">
    <property type="entry name" value="RE1-silencing transcription factor A"/>
    <property type="match status" value="1"/>
</dbReference>
<dbReference type="FunFam" id="3.30.160.60:FF:000805">
    <property type="entry name" value="RE1-silencing transcription factor B"/>
    <property type="match status" value="1"/>
</dbReference>
<dbReference type="FunFam" id="3.30.160.60:FF:000952">
    <property type="entry name" value="RE1-silencing transcription factor B"/>
    <property type="match status" value="1"/>
</dbReference>
<dbReference type="FunFam" id="3.30.160.60:FF:000395">
    <property type="entry name" value="zinc finger protein 513"/>
    <property type="match status" value="1"/>
</dbReference>
<dbReference type="Gene3D" id="3.30.160.60">
    <property type="entry name" value="Classic Zinc Finger"/>
    <property type="match status" value="5"/>
</dbReference>
<dbReference type="InterPro" id="IPR050688">
    <property type="entry name" value="Zinc_finger/UBP_domain"/>
</dbReference>
<dbReference type="InterPro" id="IPR036236">
    <property type="entry name" value="Znf_C2H2_sf"/>
</dbReference>
<dbReference type="InterPro" id="IPR013087">
    <property type="entry name" value="Znf_C2H2_type"/>
</dbReference>
<dbReference type="PANTHER" id="PTHR24403:SF102">
    <property type="entry name" value="RE1-SILENCING TRANSCRIPTION FACTOR"/>
    <property type="match status" value="1"/>
</dbReference>
<dbReference type="PANTHER" id="PTHR24403">
    <property type="entry name" value="ZINC FINGER PROTEIN"/>
    <property type="match status" value="1"/>
</dbReference>
<dbReference type="Pfam" id="PF00096">
    <property type="entry name" value="zf-C2H2"/>
    <property type="match status" value="2"/>
</dbReference>
<dbReference type="Pfam" id="PF24540">
    <property type="entry name" value="zf-C2H2_REST"/>
    <property type="match status" value="1"/>
</dbReference>
<dbReference type="Pfam" id="PF13909">
    <property type="entry name" value="zf-H2C2_5"/>
    <property type="match status" value="1"/>
</dbReference>
<dbReference type="SMART" id="SM00355">
    <property type="entry name" value="ZnF_C2H2"/>
    <property type="match status" value="8"/>
</dbReference>
<dbReference type="SUPFAM" id="SSF57667">
    <property type="entry name" value="beta-beta-alpha zinc fingers"/>
    <property type="match status" value="4"/>
</dbReference>
<dbReference type="PROSITE" id="PS50157">
    <property type="entry name" value="ZINC_FINGER_C2H2_2"/>
    <property type="match status" value="5"/>
</dbReference>
<organism>
    <name type="scientific">Xenopus laevis</name>
    <name type="common">African clawed frog</name>
    <dbReference type="NCBI Taxonomy" id="8355"/>
    <lineage>
        <taxon>Eukaryota</taxon>
        <taxon>Metazoa</taxon>
        <taxon>Chordata</taxon>
        <taxon>Craniata</taxon>
        <taxon>Vertebrata</taxon>
        <taxon>Euteleostomi</taxon>
        <taxon>Amphibia</taxon>
        <taxon>Batrachia</taxon>
        <taxon>Anura</taxon>
        <taxon>Pipoidea</taxon>
        <taxon>Pipidae</taxon>
        <taxon>Xenopodinae</taxon>
        <taxon>Xenopus</taxon>
        <taxon>Xenopus</taxon>
    </lineage>
</organism>
<feature type="chain" id="PRO_0000269552" description="RE1-silencing transcription factor B">
    <location>
        <begin position="1"/>
        <end position="529" status="greater than"/>
    </location>
</feature>
<feature type="zinc finger region" description="C2H2-type 1" evidence="3">
    <location>
        <begin position="156"/>
        <end position="178"/>
    </location>
</feature>
<feature type="zinc finger region" description="C2H2-type 2" evidence="3">
    <location>
        <begin position="212"/>
        <end position="234"/>
    </location>
</feature>
<feature type="zinc finger region" description="C2H2-type 3" evidence="3">
    <location>
        <begin position="244"/>
        <end position="266"/>
    </location>
</feature>
<feature type="zinc finger region" description="C2H2-type 4" evidence="3">
    <location>
        <begin position="272"/>
        <end position="294"/>
    </location>
</feature>
<feature type="zinc finger region" description="C2H2-type 5" evidence="3">
    <location>
        <begin position="300"/>
        <end position="322"/>
    </location>
</feature>
<feature type="zinc finger region" description="C2H2-type 6" evidence="3">
    <location>
        <begin position="328"/>
        <end position="351"/>
    </location>
</feature>
<feature type="zinc finger region" description="C2H2-type 7" evidence="3">
    <location>
        <begin position="357"/>
        <end position="379"/>
    </location>
</feature>
<feature type="zinc finger region" description="C2H2-type 8" evidence="3">
    <location>
        <begin position="385"/>
        <end position="408"/>
    </location>
</feature>
<feature type="region of interest" description="Disordered" evidence="4">
    <location>
        <begin position="188"/>
        <end position="210"/>
    </location>
</feature>
<feature type="region of interest" description="Disordered" evidence="4">
    <location>
        <begin position="484"/>
        <end position="529"/>
    </location>
</feature>
<feature type="compositionally biased region" description="Basic and acidic residues" evidence="4">
    <location>
        <begin position="492"/>
        <end position="506"/>
    </location>
</feature>
<feature type="compositionally biased region" description="Polar residues" evidence="4">
    <location>
        <begin position="518"/>
        <end position="529"/>
    </location>
</feature>
<feature type="splice variant" id="VSP_022084" description="In isoform 2." evidence="5">
    <original>ERPYQCI</original>
    <variation>KTFSFYY</variation>
    <location>
        <begin position="297"/>
        <end position="303"/>
    </location>
</feature>
<feature type="splice variant" id="VSP_022085" description="In isoform 2." evidence="5">
    <location>
        <begin position="304"/>
        <end position="529"/>
    </location>
</feature>
<feature type="non-terminal residue">
    <location>
        <position position="529"/>
    </location>
</feature>
<reference key="1">
    <citation type="submission" date="1998-10" db="EMBL/GenBank/DDBJ databases">
        <title>Cloning and expression pattern of Xenopus laevis REST.</title>
        <authorList>
            <person name="Eggen B.J.L."/>
            <person name="Toledo-Aral J.J."/>
            <person name="Mandel G."/>
            <person name="Hemmati-Brivanlou A."/>
        </authorList>
    </citation>
    <scope>NUCLEOTIDE SEQUENCE [MRNA] (ISOFORMS 1 AND 2)</scope>
</reference>
<evidence type="ECO:0000250" key="1">
    <source>
        <dbReference type="UniProtKB" id="Q13127"/>
    </source>
</evidence>
<evidence type="ECO:0000250" key="2">
    <source>
        <dbReference type="UniProtKB" id="Q2EI21"/>
    </source>
</evidence>
<evidence type="ECO:0000255" key="3">
    <source>
        <dbReference type="PROSITE-ProRule" id="PRU00042"/>
    </source>
</evidence>
<evidence type="ECO:0000256" key="4">
    <source>
        <dbReference type="SAM" id="MobiDB-lite"/>
    </source>
</evidence>
<evidence type="ECO:0000303" key="5">
    <source ref="1"/>
</evidence>